<reference key="1">
    <citation type="journal article" date="2002" name="Nat. Biotechnol.">
        <title>Genome sequence of the dissimilatory metal ion-reducing bacterium Shewanella oneidensis.</title>
        <authorList>
            <person name="Heidelberg J.F."/>
            <person name="Paulsen I.T."/>
            <person name="Nelson K.E."/>
            <person name="Gaidos E.J."/>
            <person name="Nelson W.C."/>
            <person name="Read T.D."/>
            <person name="Eisen J.A."/>
            <person name="Seshadri R."/>
            <person name="Ward N.L."/>
            <person name="Methe B.A."/>
            <person name="Clayton R.A."/>
            <person name="Meyer T."/>
            <person name="Tsapin A."/>
            <person name="Scott J."/>
            <person name="Beanan M.J."/>
            <person name="Brinkac L.M."/>
            <person name="Daugherty S.C."/>
            <person name="DeBoy R.T."/>
            <person name="Dodson R.J."/>
            <person name="Durkin A.S."/>
            <person name="Haft D.H."/>
            <person name="Kolonay J.F."/>
            <person name="Madupu R."/>
            <person name="Peterson J.D."/>
            <person name="Umayam L.A."/>
            <person name="White O."/>
            <person name="Wolf A.M."/>
            <person name="Vamathevan J.J."/>
            <person name="Weidman J.F."/>
            <person name="Impraim M."/>
            <person name="Lee K."/>
            <person name="Berry K.J."/>
            <person name="Lee C."/>
            <person name="Mueller J."/>
            <person name="Khouri H.M."/>
            <person name="Gill J."/>
            <person name="Utterback T.R."/>
            <person name="McDonald L.A."/>
            <person name="Feldblyum T.V."/>
            <person name="Smith H.O."/>
            <person name="Venter J.C."/>
            <person name="Nealson K.H."/>
            <person name="Fraser C.M."/>
        </authorList>
    </citation>
    <scope>NUCLEOTIDE SEQUENCE [LARGE SCALE GENOMIC DNA]</scope>
    <source>
        <strain>ATCC 700550 / JCM 31522 / CIP 106686 / LMG 19005 / NCIMB 14063 / MR-1</strain>
    </source>
</reference>
<name>FABV_SHEON</name>
<evidence type="ECO:0000255" key="1">
    <source>
        <dbReference type="HAMAP-Rule" id="MF_01838"/>
    </source>
</evidence>
<keyword id="KW-0275">Fatty acid biosynthesis</keyword>
<keyword id="KW-0276">Fatty acid metabolism</keyword>
<keyword id="KW-0444">Lipid biosynthesis</keyword>
<keyword id="KW-0443">Lipid metabolism</keyword>
<keyword id="KW-0520">NAD</keyword>
<keyword id="KW-0560">Oxidoreductase</keyword>
<keyword id="KW-1185">Reference proteome</keyword>
<organism>
    <name type="scientific">Shewanella oneidensis (strain ATCC 700550 / JCM 31522 / CIP 106686 / LMG 19005 / NCIMB 14063 / MR-1)</name>
    <dbReference type="NCBI Taxonomy" id="211586"/>
    <lineage>
        <taxon>Bacteria</taxon>
        <taxon>Pseudomonadati</taxon>
        <taxon>Pseudomonadota</taxon>
        <taxon>Gammaproteobacteria</taxon>
        <taxon>Alteromonadales</taxon>
        <taxon>Shewanellaceae</taxon>
        <taxon>Shewanella</taxon>
    </lineage>
</organism>
<dbReference type="EC" id="1.3.1.9" evidence="1"/>
<dbReference type="EMBL" id="AE014299">
    <property type="protein sequence ID" value="AAN54852.1"/>
    <property type="molecule type" value="Genomic_DNA"/>
</dbReference>
<dbReference type="RefSeq" id="NP_717408.1">
    <property type="nucleotide sequence ID" value="NC_004347.2"/>
</dbReference>
<dbReference type="RefSeq" id="WP_011071921.1">
    <property type="nucleotide sequence ID" value="NC_004347.2"/>
</dbReference>
<dbReference type="SMR" id="Q8EG14"/>
<dbReference type="STRING" id="211586.SO_1800"/>
<dbReference type="PaxDb" id="211586-SO_1800"/>
<dbReference type="KEGG" id="son:SO_1800"/>
<dbReference type="PATRIC" id="fig|211586.12.peg.1730"/>
<dbReference type="eggNOG" id="COG3007">
    <property type="taxonomic scope" value="Bacteria"/>
</dbReference>
<dbReference type="HOGENOM" id="CLU_057698_1_0_6"/>
<dbReference type="OrthoDB" id="9802260at2"/>
<dbReference type="PhylomeDB" id="Q8EG14"/>
<dbReference type="BioCyc" id="SONE211586:G1GMP-1651-MONOMER"/>
<dbReference type="UniPathway" id="UPA00094"/>
<dbReference type="Proteomes" id="UP000008186">
    <property type="component" value="Chromosome"/>
</dbReference>
<dbReference type="GO" id="GO:0004318">
    <property type="term" value="F:enoyl-[acyl-carrier-protein] reductase (NADH) activity"/>
    <property type="evidence" value="ECO:0000318"/>
    <property type="project" value="GO_Central"/>
</dbReference>
<dbReference type="GO" id="GO:0051287">
    <property type="term" value="F:NAD binding"/>
    <property type="evidence" value="ECO:0000318"/>
    <property type="project" value="GO_Central"/>
</dbReference>
<dbReference type="GO" id="GO:0050343">
    <property type="term" value="F:trans-2-enoyl-CoA reductase (NADH) activity"/>
    <property type="evidence" value="ECO:0000318"/>
    <property type="project" value="GO_Central"/>
</dbReference>
<dbReference type="GO" id="GO:0006633">
    <property type="term" value="P:fatty acid biosynthetic process"/>
    <property type="evidence" value="ECO:0000318"/>
    <property type="project" value="GO_Central"/>
</dbReference>
<dbReference type="FunFam" id="3.40.50.720:FF:000221">
    <property type="entry name" value="Enoyl-[acyl-carrier-protein] reductase [NADH]"/>
    <property type="match status" value="1"/>
</dbReference>
<dbReference type="Gene3D" id="3.40.50.720">
    <property type="entry name" value="NAD(P)-binding Rossmann-like Domain"/>
    <property type="match status" value="1"/>
</dbReference>
<dbReference type="HAMAP" id="MF_01838">
    <property type="entry name" value="FabV_reductase"/>
    <property type="match status" value="1"/>
</dbReference>
<dbReference type="InterPro" id="IPR024906">
    <property type="entry name" value="Eno_Rdtase_FAD-bd_dom"/>
</dbReference>
<dbReference type="InterPro" id="IPR024910">
    <property type="entry name" value="Enoyl-CoA_Rdtase_cat_dom"/>
</dbReference>
<dbReference type="InterPro" id="IPR050048">
    <property type="entry name" value="FabV-like_NADH_b"/>
</dbReference>
<dbReference type="InterPro" id="IPR010758">
    <property type="entry name" value="Trans-2-enoyl-CoA_reductase"/>
</dbReference>
<dbReference type="NCBIfam" id="NF043048">
    <property type="entry name" value="EnoyACPredFabV"/>
    <property type="match status" value="1"/>
</dbReference>
<dbReference type="NCBIfam" id="NF010177">
    <property type="entry name" value="PRK13656.1"/>
    <property type="match status" value="1"/>
</dbReference>
<dbReference type="PANTHER" id="PTHR37480">
    <property type="entry name" value="ENOYL-[ACYL-CARRIER-PROTEIN] REDUCTASE [NADH]"/>
    <property type="match status" value="1"/>
</dbReference>
<dbReference type="PANTHER" id="PTHR37480:SF1">
    <property type="entry name" value="ENOYL-[ACYL-CARRIER-PROTEIN] REDUCTASE [NADH]"/>
    <property type="match status" value="1"/>
</dbReference>
<dbReference type="Pfam" id="PF07055">
    <property type="entry name" value="Eno-Rase_FAD_bd"/>
    <property type="match status" value="1"/>
</dbReference>
<dbReference type="Pfam" id="PF12242">
    <property type="entry name" value="Eno-Rase_NADH_b"/>
    <property type="match status" value="1"/>
</dbReference>
<dbReference type="Pfam" id="PF12241">
    <property type="entry name" value="Enoyl_reductase"/>
    <property type="match status" value="1"/>
</dbReference>
<sequence>MIIKPKIRGFICTTTHPVGCEANVQEQIALTKAKGKIANGPKKVLVVGSSSGYGLSSRIAAAFGSDAATIGVFFEKPGTEAKPGTAGWYNSAAFDKFAKAEGLYSKSINCDAFSHEAKQKVIELIKQDLGQVDMVVYSLASPVRKLPDSGELVRSALKPIGETYTATAVDTNKDCIIEATVEPATEQEIADTVTVMGGQDWELWINALAEAGVLSDNCKTVAYSYIGTELTWPIYWHGALGKAKMDLDRAAKALNDKLSVTGGSANVAVLKSVVTQASSAIPVMPLYIAMVFKKMRQEGLHEGCMEQIYRMFSERLFRADGAKPETDSDNRLRLDDWELREDIQQHCRDLWPQVTTENLSELTDYQEYKAEFIKLFGFGIEGINYDADVNPYVEFDVIEL</sequence>
<protein>
    <recommendedName>
        <fullName evidence="1">Enoyl-[acyl-carrier-protein] reductase [NADH]</fullName>
        <shortName evidence="1">ENR</shortName>
        <ecNumber evidence="1">1.3.1.9</ecNumber>
    </recommendedName>
</protein>
<feature type="chain" id="PRO_0000220048" description="Enoyl-[acyl-carrier-protein] reductase [NADH]">
    <location>
        <begin position="1"/>
        <end position="400"/>
    </location>
</feature>
<feature type="active site" description="Proton donor" evidence="1">
    <location>
        <position position="235"/>
    </location>
</feature>
<feature type="binding site" evidence="1">
    <location>
        <begin position="48"/>
        <end position="53"/>
    </location>
    <ligand>
        <name>NAD(+)</name>
        <dbReference type="ChEBI" id="CHEBI:57540"/>
    </ligand>
</feature>
<feature type="binding site" evidence="1">
    <location>
        <begin position="74"/>
        <end position="75"/>
    </location>
    <ligand>
        <name>NAD(+)</name>
        <dbReference type="ChEBI" id="CHEBI:57540"/>
    </ligand>
</feature>
<feature type="binding site" evidence="1">
    <location>
        <begin position="111"/>
        <end position="112"/>
    </location>
    <ligand>
        <name>NAD(+)</name>
        <dbReference type="ChEBI" id="CHEBI:57540"/>
    </ligand>
</feature>
<feature type="binding site" evidence="1">
    <location>
        <begin position="139"/>
        <end position="140"/>
    </location>
    <ligand>
        <name>NAD(+)</name>
        <dbReference type="ChEBI" id="CHEBI:57540"/>
    </ligand>
</feature>
<feature type="binding site" evidence="1">
    <location>
        <position position="225"/>
    </location>
    <ligand>
        <name>substrate</name>
    </ligand>
</feature>
<feature type="binding site" evidence="1">
    <location>
        <position position="244"/>
    </location>
    <ligand>
        <name>NAD(+)</name>
        <dbReference type="ChEBI" id="CHEBI:57540"/>
    </ligand>
</feature>
<feature type="binding site" evidence="1">
    <location>
        <begin position="273"/>
        <end position="275"/>
    </location>
    <ligand>
        <name>NAD(+)</name>
        <dbReference type="ChEBI" id="CHEBI:57540"/>
    </ligand>
</feature>
<feature type="site" description="Plays an important role in discriminating NADH against NADPH" evidence="1">
    <location>
        <position position="75"/>
    </location>
</feature>
<accession>Q8EG14</accession>
<proteinExistence type="inferred from homology"/>
<gene>
    <name evidence="1" type="primary">fabV</name>
    <name type="ordered locus">SO_1800</name>
</gene>
<comment type="function">
    <text evidence="1">Involved in the final reduction of the elongation cycle of fatty acid synthesis (FAS II). Catalyzes the reduction of a carbon-carbon double bond in an enoyl moiety that is covalently linked to an acyl carrier protein (ACP).</text>
</comment>
<comment type="catalytic activity">
    <reaction evidence="1">
        <text>a 2,3-saturated acyl-[ACP] + NAD(+) = a (2E)-enoyl-[ACP] + NADH + H(+)</text>
        <dbReference type="Rhea" id="RHEA:10240"/>
        <dbReference type="Rhea" id="RHEA-COMP:9925"/>
        <dbReference type="Rhea" id="RHEA-COMP:9926"/>
        <dbReference type="ChEBI" id="CHEBI:15378"/>
        <dbReference type="ChEBI" id="CHEBI:57540"/>
        <dbReference type="ChEBI" id="CHEBI:57945"/>
        <dbReference type="ChEBI" id="CHEBI:78784"/>
        <dbReference type="ChEBI" id="CHEBI:78785"/>
        <dbReference type="EC" id="1.3.1.9"/>
    </reaction>
</comment>
<comment type="pathway">
    <text evidence="1">Lipid metabolism; fatty acid biosynthesis.</text>
</comment>
<comment type="subunit">
    <text evidence="1">Monomer.</text>
</comment>
<comment type="similarity">
    <text evidence="1">Belongs to the TER reductase family.</text>
</comment>